<gene>
    <name evidence="1" type="primary">msbA</name>
    <name type="ordered locus">YPN_2582</name>
    <name type="ORF">YP516_2909</name>
</gene>
<feature type="chain" id="PRO_5000115460" description="ATP-dependent lipid A-core flippase">
    <location>
        <begin position="1"/>
        <end position="582"/>
    </location>
</feature>
<feature type="transmembrane region" description="Helical" evidence="1">
    <location>
        <begin position="25"/>
        <end position="45"/>
    </location>
</feature>
<feature type="transmembrane region" description="Helical" evidence="1">
    <location>
        <begin position="69"/>
        <end position="89"/>
    </location>
</feature>
<feature type="transmembrane region" description="Helical" evidence="1">
    <location>
        <begin position="137"/>
        <end position="159"/>
    </location>
</feature>
<feature type="transmembrane region" description="Helical" evidence="1">
    <location>
        <begin position="253"/>
        <end position="273"/>
    </location>
</feature>
<feature type="transmembrane region" description="Helical" evidence="1">
    <location>
        <begin position="275"/>
        <end position="295"/>
    </location>
</feature>
<feature type="domain" description="ABC transmembrane type-1" evidence="1">
    <location>
        <begin position="28"/>
        <end position="310"/>
    </location>
</feature>
<feature type="domain" description="ABC transporter" evidence="1">
    <location>
        <begin position="342"/>
        <end position="578"/>
    </location>
</feature>
<feature type="binding site" evidence="1">
    <location>
        <begin position="376"/>
        <end position="383"/>
    </location>
    <ligand>
        <name>ATP</name>
        <dbReference type="ChEBI" id="CHEBI:30616"/>
    </ligand>
</feature>
<keyword id="KW-0067">ATP-binding</keyword>
<keyword id="KW-0997">Cell inner membrane</keyword>
<keyword id="KW-1003">Cell membrane</keyword>
<keyword id="KW-0445">Lipid transport</keyword>
<keyword id="KW-0472">Membrane</keyword>
<keyword id="KW-0547">Nucleotide-binding</keyword>
<keyword id="KW-1278">Translocase</keyword>
<keyword id="KW-0812">Transmembrane</keyword>
<keyword id="KW-1133">Transmembrane helix</keyword>
<keyword id="KW-0813">Transport</keyword>
<organism>
    <name type="scientific">Yersinia pestis bv. Antiqua (strain Nepal516)</name>
    <dbReference type="NCBI Taxonomy" id="377628"/>
    <lineage>
        <taxon>Bacteria</taxon>
        <taxon>Pseudomonadati</taxon>
        <taxon>Pseudomonadota</taxon>
        <taxon>Gammaproteobacteria</taxon>
        <taxon>Enterobacterales</taxon>
        <taxon>Yersiniaceae</taxon>
        <taxon>Yersinia</taxon>
    </lineage>
</organism>
<sequence length="582" mass="64462">MMNDKDLSTWQTFRRLWPTISPYKAGLIVAAIALILNAASDTFMLSLLKPLLDDGFGNSNSSILKWMPLAVIGLMVVRGVTGFVSSYCISWVSGKVVMHIRRRLFSHMMGMPVSFFDQQSTGTLLSRITYDSEQVAASSSSALVTVVREGASIIGLFIMMFYYSWQLSLILIVIAPIVSISIRLVSKRFRNISKNMQNTMGEVTTSAEQMLKGHKEVLIFGGQKVETERFDAVSNRMRQQGMKLVSASSISDPIIQLIASFALALVLYAASFPSVMETLTAGTITVVFSAMIALMRPLKSLTNVNTQFQRGMAACQTLFSILDMEQEKDEGKLEVERAKGDIEFRHVTFYYPGKDTPALNDINIHLEAGKTVALVGRSGSGKSTIANLLTRFYDVSEGSILLDGHDLRDYRLGALRNQVALVSQNVHLFNDTVANNIAYARNEQYSRAEIEEAARMAYAMDFINKMEHGLDTVIGENGIMLSGGQRQRIAIARALLRNCPILILDEATSALDTESERAIQAALDELQKNRTSLVIAHRLSTIEKADEIVVIEDGRIVERGVHAELLVQQGVYAQLNRMQFGQ</sequence>
<reference key="1">
    <citation type="journal article" date="2006" name="J. Bacteriol.">
        <title>Complete genome sequence of Yersinia pestis strains Antiqua and Nepal516: evidence of gene reduction in an emerging pathogen.</title>
        <authorList>
            <person name="Chain P.S.G."/>
            <person name="Hu P."/>
            <person name="Malfatti S.A."/>
            <person name="Radnedge L."/>
            <person name="Larimer F."/>
            <person name="Vergez L.M."/>
            <person name="Worsham P."/>
            <person name="Chu M.C."/>
            <person name="Andersen G.L."/>
        </authorList>
    </citation>
    <scope>NUCLEOTIDE SEQUENCE [LARGE SCALE GENOMIC DNA]</scope>
    <source>
        <strain>Nepal516</strain>
    </source>
</reference>
<reference key="2">
    <citation type="submission" date="2009-04" db="EMBL/GenBank/DDBJ databases">
        <title>Yersinia pestis Nepal516A whole genome shotgun sequencing project.</title>
        <authorList>
            <person name="Plunkett G. III"/>
            <person name="Anderson B.D."/>
            <person name="Baumler D.J."/>
            <person name="Burland V."/>
            <person name="Cabot E.L."/>
            <person name="Glasner J.D."/>
            <person name="Mau B."/>
            <person name="Neeno-Eckwall E."/>
            <person name="Perna N.T."/>
            <person name="Munk A.C."/>
            <person name="Tapia R."/>
            <person name="Green L.D."/>
            <person name="Rogers Y.C."/>
            <person name="Detter J.C."/>
            <person name="Bruce D.C."/>
            <person name="Brettin T.S."/>
        </authorList>
    </citation>
    <scope>NUCLEOTIDE SEQUENCE [LARGE SCALE GENOMIC DNA]</scope>
    <source>
        <strain>Nepal516</strain>
    </source>
</reference>
<name>MSBA_YERPN</name>
<evidence type="ECO:0000255" key="1">
    <source>
        <dbReference type="HAMAP-Rule" id="MF_01703"/>
    </source>
</evidence>
<accession>Q1CGH0</accession>
<accession>C4GVS4</accession>
<dbReference type="EC" id="7.5.2.6" evidence="1"/>
<dbReference type="EMBL" id="CP000305">
    <property type="protein sequence ID" value="ABG18910.1"/>
    <property type="molecule type" value="Genomic_DNA"/>
</dbReference>
<dbReference type="EMBL" id="ACNQ01000017">
    <property type="protein sequence ID" value="EEO75024.1"/>
    <property type="molecule type" value="Genomic_DNA"/>
</dbReference>
<dbReference type="RefSeq" id="WP_002211320.1">
    <property type="nucleotide sequence ID" value="NZ_ACNQ01000017.1"/>
</dbReference>
<dbReference type="SMR" id="Q1CGH0"/>
<dbReference type="GeneID" id="57977191"/>
<dbReference type="KEGG" id="ypn:YPN_2582"/>
<dbReference type="HOGENOM" id="CLU_000604_84_3_6"/>
<dbReference type="Proteomes" id="UP000008936">
    <property type="component" value="Chromosome"/>
</dbReference>
<dbReference type="GO" id="GO:0005886">
    <property type="term" value="C:plasma membrane"/>
    <property type="evidence" value="ECO:0007669"/>
    <property type="project" value="UniProtKB-SubCell"/>
</dbReference>
<dbReference type="GO" id="GO:0015421">
    <property type="term" value="F:ABC-type oligopeptide transporter activity"/>
    <property type="evidence" value="ECO:0007669"/>
    <property type="project" value="TreeGrafter"/>
</dbReference>
<dbReference type="GO" id="GO:0005524">
    <property type="term" value="F:ATP binding"/>
    <property type="evidence" value="ECO:0007669"/>
    <property type="project" value="UniProtKB-KW"/>
</dbReference>
<dbReference type="GO" id="GO:0016887">
    <property type="term" value="F:ATP hydrolysis activity"/>
    <property type="evidence" value="ECO:0007669"/>
    <property type="project" value="InterPro"/>
</dbReference>
<dbReference type="GO" id="GO:0034040">
    <property type="term" value="F:ATPase-coupled lipid transmembrane transporter activity"/>
    <property type="evidence" value="ECO:0007669"/>
    <property type="project" value="InterPro"/>
</dbReference>
<dbReference type="CDD" id="cd18552">
    <property type="entry name" value="ABC_6TM_MsbA_like"/>
    <property type="match status" value="1"/>
</dbReference>
<dbReference type="CDD" id="cd03251">
    <property type="entry name" value="ABCC_MsbA"/>
    <property type="match status" value="1"/>
</dbReference>
<dbReference type="FunFam" id="1.20.1560.10:FF:000008">
    <property type="entry name" value="Lipid A export ATP-binding/permease protein MsbA"/>
    <property type="match status" value="1"/>
</dbReference>
<dbReference type="FunFam" id="3.40.50.300:FF:000140">
    <property type="entry name" value="Lipid A export ATP-binding/permease protein MsbA"/>
    <property type="match status" value="1"/>
</dbReference>
<dbReference type="Gene3D" id="1.20.1560.10">
    <property type="entry name" value="ABC transporter type 1, transmembrane domain"/>
    <property type="match status" value="1"/>
</dbReference>
<dbReference type="Gene3D" id="3.40.50.300">
    <property type="entry name" value="P-loop containing nucleotide triphosphate hydrolases"/>
    <property type="match status" value="1"/>
</dbReference>
<dbReference type="InterPro" id="IPR003593">
    <property type="entry name" value="AAA+_ATPase"/>
</dbReference>
<dbReference type="InterPro" id="IPR011527">
    <property type="entry name" value="ABC1_TM_dom"/>
</dbReference>
<dbReference type="InterPro" id="IPR036640">
    <property type="entry name" value="ABC1_TM_sf"/>
</dbReference>
<dbReference type="InterPro" id="IPR003439">
    <property type="entry name" value="ABC_transporter-like_ATP-bd"/>
</dbReference>
<dbReference type="InterPro" id="IPR017871">
    <property type="entry name" value="ABC_transporter-like_CS"/>
</dbReference>
<dbReference type="InterPro" id="IPR011917">
    <property type="entry name" value="ABC_transpr_lipidA"/>
</dbReference>
<dbReference type="InterPro" id="IPR027417">
    <property type="entry name" value="P-loop_NTPase"/>
</dbReference>
<dbReference type="InterPro" id="IPR039421">
    <property type="entry name" value="Type_1_exporter"/>
</dbReference>
<dbReference type="NCBIfam" id="TIGR02203">
    <property type="entry name" value="MsbA_lipidA"/>
    <property type="match status" value="1"/>
</dbReference>
<dbReference type="NCBIfam" id="NF008381">
    <property type="entry name" value="PRK11176.1"/>
    <property type="match status" value="1"/>
</dbReference>
<dbReference type="PANTHER" id="PTHR43394:SF1">
    <property type="entry name" value="ATP-BINDING CASSETTE SUB-FAMILY B MEMBER 10, MITOCHONDRIAL"/>
    <property type="match status" value="1"/>
</dbReference>
<dbReference type="PANTHER" id="PTHR43394">
    <property type="entry name" value="ATP-DEPENDENT PERMEASE MDL1, MITOCHONDRIAL"/>
    <property type="match status" value="1"/>
</dbReference>
<dbReference type="Pfam" id="PF00664">
    <property type="entry name" value="ABC_membrane"/>
    <property type="match status" value="1"/>
</dbReference>
<dbReference type="Pfam" id="PF00005">
    <property type="entry name" value="ABC_tran"/>
    <property type="match status" value="1"/>
</dbReference>
<dbReference type="SMART" id="SM00382">
    <property type="entry name" value="AAA"/>
    <property type="match status" value="1"/>
</dbReference>
<dbReference type="SUPFAM" id="SSF90123">
    <property type="entry name" value="ABC transporter transmembrane region"/>
    <property type="match status" value="1"/>
</dbReference>
<dbReference type="SUPFAM" id="SSF52540">
    <property type="entry name" value="P-loop containing nucleoside triphosphate hydrolases"/>
    <property type="match status" value="1"/>
</dbReference>
<dbReference type="PROSITE" id="PS50929">
    <property type="entry name" value="ABC_TM1F"/>
    <property type="match status" value="1"/>
</dbReference>
<dbReference type="PROSITE" id="PS00211">
    <property type="entry name" value="ABC_TRANSPORTER_1"/>
    <property type="match status" value="1"/>
</dbReference>
<dbReference type="PROSITE" id="PS50893">
    <property type="entry name" value="ABC_TRANSPORTER_2"/>
    <property type="match status" value="1"/>
</dbReference>
<dbReference type="PROSITE" id="PS51239">
    <property type="entry name" value="MSBA"/>
    <property type="match status" value="1"/>
</dbReference>
<comment type="function">
    <text evidence="1">Involved in lipopolysaccharide (LPS) biosynthesis. Translocates lipid A-core from the inner to the outer leaflet of the inner membrane. Transmembrane domains (TMD) form a pore in the inner membrane and the ATP-binding domain (NBD) is responsible for energy generation.</text>
</comment>
<comment type="catalytic activity">
    <reaction evidence="1">
        <text>ATP + H2O + lipid A-core oligosaccharideSide 1 = ADP + phosphate + lipid A-core oligosaccharideSide 2.</text>
        <dbReference type="EC" id="7.5.2.6"/>
    </reaction>
</comment>
<comment type="subunit">
    <text evidence="1">Homodimer.</text>
</comment>
<comment type="subcellular location">
    <subcellularLocation>
        <location evidence="1">Cell inner membrane</location>
        <topology evidence="1">Multi-pass membrane protein</topology>
    </subcellularLocation>
</comment>
<comment type="domain">
    <text evidence="1">In MsbA the ATP-binding domain (NBD) and the transmembrane domain (TMD) are fused.</text>
</comment>
<comment type="similarity">
    <text evidence="1">Belongs to the ABC transporter superfamily. Lipid exporter (TC 3.A.1.106) family.</text>
</comment>
<protein>
    <recommendedName>
        <fullName evidence="1">ATP-dependent lipid A-core flippase</fullName>
        <ecNumber evidence="1">7.5.2.6</ecNumber>
    </recommendedName>
    <alternativeName>
        <fullName evidence="1">Lipid A export ATP-binding/permease protein MsbA</fullName>
    </alternativeName>
</protein>
<proteinExistence type="inferred from homology"/>